<proteinExistence type="evidence at transcript level"/>
<sequence>MKYFVVALALVAAFACIAESKPAESEHELAEVEEENELADLEDAVWLEHLADLSDLEEARGFFGNTWKKIKGKADKIMLKKAVKIMVKKEGISKEEAQAKVDAMSKKQIRLYVLKHYGKKSSSKSFRKIVISKSF</sequence>
<dbReference type="SMR" id="P0CAZ9"/>
<dbReference type="ArachnoServer" id="AS000770">
    <property type="toxin name" value="M-zodatoxin-Lt8q"/>
</dbReference>
<dbReference type="GO" id="GO:0005576">
    <property type="term" value="C:extracellular region"/>
    <property type="evidence" value="ECO:0007669"/>
    <property type="project" value="UniProtKB-SubCell"/>
</dbReference>
<dbReference type="GO" id="GO:0090729">
    <property type="term" value="F:toxin activity"/>
    <property type="evidence" value="ECO:0007669"/>
    <property type="project" value="UniProtKB-KW"/>
</dbReference>
<dbReference type="GO" id="GO:0042742">
    <property type="term" value="P:defense response to bacterium"/>
    <property type="evidence" value="ECO:0007669"/>
    <property type="project" value="UniProtKB-KW"/>
</dbReference>
<dbReference type="GO" id="GO:0031640">
    <property type="term" value="P:killing of cells of another organism"/>
    <property type="evidence" value="ECO:0007669"/>
    <property type="project" value="UniProtKB-KW"/>
</dbReference>
<dbReference type="InterPro" id="IPR018802">
    <property type="entry name" value="Latarcin_precursor"/>
</dbReference>
<dbReference type="Pfam" id="PF10279">
    <property type="entry name" value="Latarcin"/>
    <property type="match status" value="1"/>
</dbReference>
<protein>
    <recommendedName>
        <fullName>M-zodatoxin-Lt8q</fullName>
        <shortName>M-ZDTX-Lt8q</shortName>
    </recommendedName>
    <alternativeName>
        <fullName>Cytoinsectotoxin 1-16</fullName>
    </alternativeName>
</protein>
<organism>
    <name type="scientific">Lachesana tarabaevi</name>
    <name type="common">Spider</name>
    <dbReference type="NCBI Taxonomy" id="379576"/>
    <lineage>
        <taxon>Eukaryota</taxon>
        <taxon>Metazoa</taxon>
        <taxon>Ecdysozoa</taxon>
        <taxon>Arthropoda</taxon>
        <taxon>Chelicerata</taxon>
        <taxon>Arachnida</taxon>
        <taxon>Araneae</taxon>
        <taxon>Araneomorphae</taxon>
        <taxon>Entelegynae</taxon>
        <taxon>Entelegynae incertae sedis</taxon>
        <taxon>Zodariidae</taxon>
        <taxon>Lachesana</taxon>
    </lineage>
</organism>
<keyword id="KW-0044">Antibiotic</keyword>
<keyword id="KW-0929">Antimicrobial</keyword>
<keyword id="KW-0204">Cytolysis</keyword>
<keyword id="KW-0354">Hemolysis</keyword>
<keyword id="KW-0964">Secreted</keyword>
<keyword id="KW-0732">Signal</keyword>
<keyword id="KW-0800">Toxin</keyword>
<gene>
    <name type="primary">cit 1-16</name>
</gene>
<name>CT116_LACTA</name>
<reference key="1">
    <citation type="journal article" date="2008" name="Biochem. J.">
        <title>Cyto-insectotoxins, a novel class of cytolytic and insecticidal peptides from spider venom.</title>
        <authorList>
            <person name="Vassilevski A.A."/>
            <person name="Kozlov S.A."/>
            <person name="Samsonova O.V."/>
            <person name="Egorova N.S."/>
            <person name="Karpunin D.V."/>
            <person name="Pluzhnikov K.A."/>
            <person name="Feofanov A.V."/>
            <person name="Grishin E.V."/>
        </authorList>
    </citation>
    <scope>NUCLEOTIDE SEQUENCE [MRNA]</scope>
    <source>
        <tissue>Venom gland</tissue>
    </source>
</reference>
<feature type="signal peptide" evidence="2">
    <location>
        <begin position="1"/>
        <end position="20"/>
    </location>
</feature>
<feature type="propeptide" id="PRO_0000380151" evidence="1">
    <location>
        <begin position="21"/>
        <end position="60"/>
    </location>
</feature>
<feature type="chain" id="PRO_0000380152" description="M-zodatoxin-Lt8q">
    <location>
        <begin position="61"/>
        <end position="135"/>
    </location>
</feature>
<evidence type="ECO:0000250" key="1"/>
<evidence type="ECO:0000255" key="2"/>
<evidence type="ECO:0000305" key="3"/>
<accession>P0CAZ9</accession>
<comment type="function">
    <text evidence="1">Insecticidal, cytolytic and antimicrobial peptide. Forms voltage-dependent, ion-permeable channels in membranes. At high concentration causes cell membrane lysis (By similarity).</text>
</comment>
<comment type="subcellular location">
    <subcellularLocation>
        <location evidence="1">Secreted</location>
    </subcellularLocation>
</comment>
<comment type="tissue specificity">
    <text>Expressed by the venom gland.</text>
</comment>
<comment type="similarity">
    <text evidence="3">Belongs to the cationic peptide 06 (cytoinsectotoxin) family.</text>
</comment>